<evidence type="ECO:0000255" key="1">
    <source>
        <dbReference type="HAMAP-Rule" id="MF_00235"/>
    </source>
</evidence>
<evidence type="ECO:0000269" key="2">
    <source>
    </source>
</evidence>
<evidence type="ECO:0000269" key="3">
    <source>
    </source>
</evidence>
<evidence type="ECO:0000305" key="4">
    <source>
    </source>
</evidence>
<evidence type="ECO:0000305" key="5">
    <source>
    </source>
</evidence>
<evidence type="ECO:0007829" key="6">
    <source>
        <dbReference type="PDB" id="1ZIN"/>
    </source>
</evidence>
<evidence type="ECO:0007829" key="7">
    <source>
        <dbReference type="PDB" id="1ZIP"/>
    </source>
</evidence>
<organism>
    <name type="scientific">Geobacillus stearothermophilus</name>
    <name type="common">Bacillus stearothermophilus</name>
    <dbReference type="NCBI Taxonomy" id="1422"/>
    <lineage>
        <taxon>Bacteria</taxon>
        <taxon>Bacillati</taxon>
        <taxon>Bacillota</taxon>
        <taxon>Bacilli</taxon>
        <taxon>Bacillales</taxon>
        <taxon>Anoxybacillaceae</taxon>
        <taxon>Geobacillus</taxon>
    </lineage>
</organism>
<name>KAD_GEOSE</name>
<accession>P27142</accession>
<keyword id="KW-0002">3D-structure</keyword>
<keyword id="KW-0067">ATP-binding</keyword>
<keyword id="KW-0963">Cytoplasm</keyword>
<keyword id="KW-0418">Kinase</keyword>
<keyword id="KW-0479">Metal-binding</keyword>
<keyword id="KW-0545">Nucleotide biosynthesis</keyword>
<keyword id="KW-0547">Nucleotide-binding</keyword>
<keyword id="KW-0808">Transferase</keyword>
<keyword id="KW-0862">Zinc</keyword>
<feature type="chain" id="PRO_0000158729" description="Adenylate kinase">
    <location>
        <begin position="1"/>
        <end position="217"/>
    </location>
</feature>
<feature type="region of interest" description="NMP" evidence="1 3">
    <location>
        <begin position="30"/>
        <end position="59"/>
    </location>
</feature>
<feature type="region of interest" description="LID" evidence="1 3">
    <location>
        <begin position="126"/>
        <end position="163"/>
    </location>
</feature>
<feature type="binding site" evidence="1 3">
    <location>
        <begin position="10"/>
        <end position="15"/>
    </location>
    <ligand>
        <name>ATP</name>
        <dbReference type="ChEBI" id="CHEBI:30616"/>
    </ligand>
</feature>
<feature type="binding site" evidence="1 3">
    <location>
        <position position="31"/>
    </location>
    <ligand>
        <name>AMP</name>
        <dbReference type="ChEBI" id="CHEBI:456215"/>
    </ligand>
</feature>
<feature type="binding site" evidence="1 3">
    <location>
        <position position="36"/>
    </location>
    <ligand>
        <name>AMP</name>
        <dbReference type="ChEBI" id="CHEBI:456215"/>
    </ligand>
</feature>
<feature type="binding site" evidence="1 3">
    <location>
        <begin position="57"/>
        <end position="59"/>
    </location>
    <ligand>
        <name>AMP</name>
        <dbReference type="ChEBI" id="CHEBI:456215"/>
    </ligand>
</feature>
<feature type="binding site" evidence="1 3">
    <location>
        <begin position="85"/>
        <end position="88"/>
    </location>
    <ligand>
        <name>AMP</name>
        <dbReference type="ChEBI" id="CHEBI:456215"/>
    </ligand>
</feature>
<feature type="binding site" evidence="1 3">
    <location>
        <position position="92"/>
    </location>
    <ligand>
        <name>AMP</name>
        <dbReference type="ChEBI" id="CHEBI:456215"/>
    </ligand>
</feature>
<feature type="binding site" evidence="1 3">
    <location>
        <position position="127"/>
    </location>
    <ligand>
        <name>ATP</name>
        <dbReference type="ChEBI" id="CHEBI:30616"/>
    </ligand>
</feature>
<feature type="binding site" evidence="1 3">
    <location>
        <position position="130"/>
    </location>
    <ligand>
        <name>Zn(2+)</name>
        <dbReference type="ChEBI" id="CHEBI:29105"/>
        <note>structural</note>
    </ligand>
</feature>
<feature type="binding site" evidence="1 3">
    <location>
        <position position="133"/>
    </location>
    <ligand>
        <name>Zn(2+)</name>
        <dbReference type="ChEBI" id="CHEBI:29105"/>
        <note>structural</note>
    </ligand>
</feature>
<feature type="binding site" evidence="1 3">
    <location>
        <begin position="136"/>
        <end position="137"/>
    </location>
    <ligand>
        <name>ATP</name>
        <dbReference type="ChEBI" id="CHEBI:30616"/>
    </ligand>
</feature>
<feature type="binding site" evidence="1 3">
    <location>
        <position position="150"/>
    </location>
    <ligand>
        <name>Zn(2+)</name>
        <dbReference type="ChEBI" id="CHEBI:29105"/>
        <note>structural</note>
    </ligand>
</feature>
<feature type="binding site" evidence="1 3">
    <location>
        <position position="153"/>
    </location>
    <ligand>
        <name>Zn(2+)</name>
        <dbReference type="ChEBI" id="CHEBI:29105"/>
        <note>structural</note>
    </ligand>
</feature>
<feature type="binding site" evidence="1 3">
    <location>
        <position position="160"/>
    </location>
    <ligand>
        <name>AMP</name>
        <dbReference type="ChEBI" id="CHEBI:456215"/>
    </ligand>
</feature>
<feature type="binding site" evidence="1 3">
    <location>
        <position position="171"/>
    </location>
    <ligand>
        <name>AMP</name>
        <dbReference type="ChEBI" id="CHEBI:456215"/>
    </ligand>
</feature>
<feature type="binding site" evidence="1 3">
    <location>
        <position position="199"/>
    </location>
    <ligand>
        <name>ATP</name>
        <dbReference type="ChEBI" id="CHEBI:30616"/>
    </ligand>
</feature>
<feature type="strand" evidence="6">
    <location>
        <begin position="2"/>
        <end position="6"/>
    </location>
</feature>
<feature type="helix" evidence="6">
    <location>
        <begin position="13"/>
        <end position="24"/>
    </location>
</feature>
<feature type="strand" evidence="6">
    <location>
        <begin position="28"/>
        <end position="30"/>
    </location>
</feature>
<feature type="helix" evidence="6">
    <location>
        <begin position="31"/>
        <end position="41"/>
    </location>
</feature>
<feature type="helix" evidence="6">
    <location>
        <begin position="44"/>
        <end position="55"/>
    </location>
</feature>
<feature type="helix" evidence="6">
    <location>
        <begin position="61"/>
        <end position="72"/>
    </location>
</feature>
<feature type="helix" evidence="6">
    <location>
        <begin position="75"/>
        <end position="77"/>
    </location>
</feature>
<feature type="strand" evidence="6">
    <location>
        <begin position="81"/>
        <end position="85"/>
    </location>
</feature>
<feature type="helix" evidence="6">
    <location>
        <begin position="90"/>
        <end position="102"/>
    </location>
</feature>
<feature type="strand" evidence="6">
    <location>
        <begin position="109"/>
        <end position="114"/>
    </location>
</feature>
<feature type="helix" evidence="6">
    <location>
        <begin position="117"/>
        <end position="125"/>
    </location>
</feature>
<feature type="strand" evidence="6">
    <location>
        <begin position="127"/>
        <end position="130"/>
    </location>
</feature>
<feature type="turn" evidence="6">
    <location>
        <begin position="131"/>
        <end position="133"/>
    </location>
</feature>
<feature type="strand" evidence="6">
    <location>
        <begin position="136"/>
        <end position="138"/>
    </location>
</feature>
<feature type="turn" evidence="6">
    <location>
        <begin position="139"/>
        <end position="141"/>
    </location>
</feature>
<feature type="turn" evidence="6">
    <location>
        <begin position="151"/>
        <end position="153"/>
    </location>
</feature>
<feature type="strand" evidence="6">
    <location>
        <begin position="156"/>
        <end position="158"/>
    </location>
</feature>
<feature type="helix" evidence="7">
    <location>
        <begin position="161"/>
        <end position="163"/>
    </location>
</feature>
<feature type="helix" evidence="6">
    <location>
        <begin position="165"/>
        <end position="179"/>
    </location>
</feature>
<feature type="helix" evidence="6">
    <location>
        <begin position="181"/>
        <end position="188"/>
    </location>
</feature>
<feature type="strand" evidence="6">
    <location>
        <begin position="192"/>
        <end position="196"/>
    </location>
</feature>
<feature type="helix" evidence="6">
    <location>
        <begin position="201"/>
        <end position="216"/>
    </location>
</feature>
<proteinExistence type="evidence at protein level"/>
<comment type="function">
    <text evidence="1 2">Catalyzes the reversible transfer of the terminal phosphate group between ATP and AMP. Plays an important role in cellular energy homeostasis and in adenine nucleotide metabolism.</text>
</comment>
<comment type="catalytic activity">
    <reaction evidence="1 2">
        <text>AMP + ATP = 2 ADP</text>
        <dbReference type="Rhea" id="RHEA:12973"/>
        <dbReference type="ChEBI" id="CHEBI:30616"/>
        <dbReference type="ChEBI" id="CHEBI:456215"/>
        <dbReference type="ChEBI" id="CHEBI:456216"/>
        <dbReference type="EC" id="2.7.4.3"/>
    </reaction>
</comment>
<comment type="biophysicochemical properties">
    <temperatureDependence>
        <text evidence="2">Optimum temperature is 65 degrees Celsius. Thermal denaturation midpoint (Tm) is 74.5 degrees Celsius.</text>
    </temperatureDependence>
</comment>
<comment type="pathway">
    <text evidence="1">Purine metabolism; AMP biosynthesis via salvage pathway; AMP from ADP: step 1/1.</text>
</comment>
<comment type="subunit">
    <text evidence="1">Monomer.</text>
</comment>
<comment type="subcellular location">
    <subcellularLocation>
        <location evidence="1">Cytoplasm</location>
    </subcellularLocation>
</comment>
<comment type="domain">
    <text evidence="1 4 5">Consists of three domains, a large central CORE domain and two small peripheral domains, NMPbind and LID, which undergo movements during catalysis. The LID domain closes over the site of phosphoryl transfer upon ATP binding. Assembling and dissambling the active center during each catalytic cycle provides an effective means to prevent ATP hydrolysis. Some bacteria have evolved a zinc-coordinating structure that stabilizes the LID domain.</text>
</comment>
<comment type="similarity">
    <text evidence="1">Belongs to the adenylate kinase family.</text>
</comment>
<sequence length="217" mass="24143">MNLVLMGLPGAGKGTQAEKIVAAYGIPHISTGDMFRAAMKEGTPLGLQAKQYMDRGDLVPDEVTIGIVRERLSKDDCQNGFLLDGFPRTVAQAEALETMLADIGRKLDYVIHIDVRQDVLMERLTGRRICRNCGATYHLIFHPPAKPGVCDKCGGELYQRADDNEATVANRLEVNMKQMKPLVDFYEQKGYLRNINGEQDMEKVFADIRELLGGLAR</sequence>
<gene>
    <name evidence="1" type="primary">adk</name>
</gene>
<reference key="1">
    <citation type="journal article" date="1992" name="Biochemistry">
        <title>Zinc, a novel structural element found in the family of bacterial adenylate kinases.</title>
        <authorList>
            <person name="Glaser P."/>
            <person name="Presecan E."/>
            <person name="Delepierre M."/>
            <person name="Surewicz W.K."/>
            <person name="Mantsch H.H."/>
            <person name="Barzu O."/>
            <person name="Gilles A.M."/>
        </authorList>
    </citation>
    <scope>NUCLEOTIDE SEQUENCE [GENOMIC DNA]</scope>
    <scope>ZINC ION</scope>
    <scope>BIOPHYSICOCHEMICAL PROPERTIES</scope>
    <scope>CATALYTIC ACTIVITY</scope>
    <scope>FUNCTION</scope>
</reference>
<reference key="2">
    <citation type="submission" date="1992-04" db="PIR data bank">
        <authorList>
            <person name="Schiltz E."/>
            <person name="Buerkle S."/>
            <person name="Stiehle H."/>
            <person name="Mader B."/>
            <person name="Schulz G.E."/>
        </authorList>
    </citation>
    <scope>NUCLEOTIDE SEQUENCE [GENOMIC DNA]</scope>
</reference>
<reference key="3">
    <citation type="journal article" date="1998" name="Proteins">
        <title>Crystal structures of Bacillus stearothermophilus adenylate kinase with bound Ap5A, Mg2+ Ap5A, and Mn2+ Ap5A reveal an intermediate lid position and six coordinate octahedral geometry for bound Mg2+ and Mn2+.</title>
        <authorList>
            <person name="Berry M.B."/>
            <person name="Phillips G.N. Jr."/>
        </authorList>
    </citation>
    <scope>X-RAY CRYSTALLOGRAPHY (1.6 ANGSTROMS) OF COMPLEX WITH BI-SUBSTRATE ANALOG AP5A AND ZINC</scope>
</reference>
<dbReference type="EC" id="2.7.4.3" evidence="1 2"/>
<dbReference type="EMBL" id="M88104">
    <property type="protein sequence ID" value="AAA22205.1"/>
    <property type="molecule type" value="Genomic_DNA"/>
</dbReference>
<dbReference type="PIR" id="B42196">
    <property type="entry name" value="KIBSAF"/>
</dbReference>
<dbReference type="RefSeq" id="WP_033017239.1">
    <property type="nucleotide sequence ID" value="NZ_JARTKY010000021.1"/>
</dbReference>
<dbReference type="PDB" id="1ZIN">
    <property type="method" value="X-ray"/>
    <property type="resolution" value="1.60 A"/>
    <property type="chains" value="A=1-217"/>
</dbReference>
<dbReference type="PDB" id="1ZIO">
    <property type="method" value="X-ray"/>
    <property type="resolution" value="1.96 A"/>
    <property type="chains" value="A=1-217"/>
</dbReference>
<dbReference type="PDB" id="1ZIP">
    <property type="method" value="X-ray"/>
    <property type="resolution" value="1.85 A"/>
    <property type="chains" value="A=1-217"/>
</dbReference>
<dbReference type="PDB" id="4QBH">
    <property type="method" value="X-ray"/>
    <property type="resolution" value="1.67 A"/>
    <property type="chains" value="A/B=1-215"/>
</dbReference>
<dbReference type="PDB" id="4QBI">
    <property type="method" value="X-ray"/>
    <property type="resolution" value="1.67 A"/>
    <property type="chains" value="A/B=1-215"/>
</dbReference>
<dbReference type="PDBsum" id="1ZIN"/>
<dbReference type="PDBsum" id="1ZIO"/>
<dbReference type="PDBsum" id="1ZIP"/>
<dbReference type="PDBsum" id="4QBH"/>
<dbReference type="PDBsum" id="4QBI"/>
<dbReference type="SMR" id="P27142"/>
<dbReference type="DrugBank" id="DB01717">
    <property type="generic name" value="Bis(Adenosine)-5'-Pentaphosphate"/>
</dbReference>
<dbReference type="BRENDA" id="2.7.4.3">
    <property type="organism ID" value="623"/>
</dbReference>
<dbReference type="SABIO-RK" id="P27142"/>
<dbReference type="UniPathway" id="UPA00588">
    <property type="reaction ID" value="UER00649"/>
</dbReference>
<dbReference type="EvolutionaryTrace" id="P27142"/>
<dbReference type="GO" id="GO:0005737">
    <property type="term" value="C:cytoplasm"/>
    <property type="evidence" value="ECO:0007669"/>
    <property type="project" value="UniProtKB-SubCell"/>
</dbReference>
<dbReference type="GO" id="GO:0004017">
    <property type="term" value="F:adenylate kinase activity"/>
    <property type="evidence" value="ECO:0007669"/>
    <property type="project" value="UniProtKB-UniRule"/>
</dbReference>
<dbReference type="GO" id="GO:0005524">
    <property type="term" value="F:ATP binding"/>
    <property type="evidence" value="ECO:0007669"/>
    <property type="project" value="UniProtKB-UniRule"/>
</dbReference>
<dbReference type="GO" id="GO:0008270">
    <property type="term" value="F:zinc ion binding"/>
    <property type="evidence" value="ECO:0007669"/>
    <property type="project" value="UniProtKB-UniRule"/>
</dbReference>
<dbReference type="GO" id="GO:0044209">
    <property type="term" value="P:AMP salvage"/>
    <property type="evidence" value="ECO:0007669"/>
    <property type="project" value="UniProtKB-UniRule"/>
</dbReference>
<dbReference type="CDD" id="cd01428">
    <property type="entry name" value="ADK"/>
    <property type="match status" value="1"/>
</dbReference>
<dbReference type="FunFam" id="3.40.50.300:FF:000106">
    <property type="entry name" value="Adenylate kinase mitochondrial"/>
    <property type="match status" value="1"/>
</dbReference>
<dbReference type="Gene3D" id="3.40.50.300">
    <property type="entry name" value="P-loop containing nucleotide triphosphate hydrolases"/>
    <property type="match status" value="1"/>
</dbReference>
<dbReference type="HAMAP" id="MF_00235">
    <property type="entry name" value="Adenylate_kinase_Adk"/>
    <property type="match status" value="1"/>
</dbReference>
<dbReference type="InterPro" id="IPR006259">
    <property type="entry name" value="Adenyl_kin_sub"/>
</dbReference>
<dbReference type="InterPro" id="IPR000850">
    <property type="entry name" value="Adenylat/UMP-CMP_kin"/>
</dbReference>
<dbReference type="InterPro" id="IPR033690">
    <property type="entry name" value="Adenylat_kinase_CS"/>
</dbReference>
<dbReference type="InterPro" id="IPR007862">
    <property type="entry name" value="Adenylate_kinase_lid-dom"/>
</dbReference>
<dbReference type="InterPro" id="IPR027417">
    <property type="entry name" value="P-loop_NTPase"/>
</dbReference>
<dbReference type="NCBIfam" id="TIGR01351">
    <property type="entry name" value="adk"/>
    <property type="match status" value="1"/>
</dbReference>
<dbReference type="NCBIfam" id="NF001380">
    <property type="entry name" value="PRK00279.1-2"/>
    <property type="match status" value="1"/>
</dbReference>
<dbReference type="NCBIfam" id="NF001381">
    <property type="entry name" value="PRK00279.1-3"/>
    <property type="match status" value="1"/>
</dbReference>
<dbReference type="NCBIfam" id="NF011100">
    <property type="entry name" value="PRK14527.1"/>
    <property type="match status" value="1"/>
</dbReference>
<dbReference type="PANTHER" id="PTHR23359">
    <property type="entry name" value="NUCLEOTIDE KINASE"/>
    <property type="match status" value="1"/>
</dbReference>
<dbReference type="Pfam" id="PF00406">
    <property type="entry name" value="ADK"/>
    <property type="match status" value="1"/>
</dbReference>
<dbReference type="Pfam" id="PF05191">
    <property type="entry name" value="ADK_lid"/>
    <property type="match status" value="1"/>
</dbReference>
<dbReference type="PRINTS" id="PR00094">
    <property type="entry name" value="ADENYLTKNASE"/>
</dbReference>
<dbReference type="SUPFAM" id="SSF52540">
    <property type="entry name" value="P-loop containing nucleoside triphosphate hydrolases"/>
    <property type="match status" value="1"/>
</dbReference>
<dbReference type="PROSITE" id="PS00113">
    <property type="entry name" value="ADENYLATE_KINASE"/>
    <property type="match status" value="1"/>
</dbReference>
<protein>
    <recommendedName>
        <fullName evidence="1">Adenylate kinase</fullName>
        <shortName evidence="1">AK</shortName>
        <ecNumber evidence="1 2">2.7.4.3</ecNumber>
    </recommendedName>
    <alternativeName>
        <fullName evidence="1">ATP-AMP transphosphorylase</fullName>
    </alternativeName>
    <alternativeName>
        <fullName evidence="1">ATP:AMP phosphotransferase</fullName>
    </alternativeName>
    <alternativeName>
        <fullName evidence="1">Adenylate monophosphate kinase</fullName>
    </alternativeName>
</protein>